<accession>C6E4W6</accession>
<protein>
    <recommendedName>
        <fullName evidence="1">Nucleotide-binding protein GM21_3387</fullName>
    </recommendedName>
</protein>
<reference key="1">
    <citation type="submission" date="2009-07" db="EMBL/GenBank/DDBJ databases">
        <title>Complete sequence of Geobacter sp. M21.</title>
        <authorList>
            <consortium name="US DOE Joint Genome Institute"/>
            <person name="Lucas S."/>
            <person name="Copeland A."/>
            <person name="Lapidus A."/>
            <person name="Glavina del Rio T."/>
            <person name="Dalin E."/>
            <person name="Tice H."/>
            <person name="Bruce D."/>
            <person name="Goodwin L."/>
            <person name="Pitluck S."/>
            <person name="Saunders E."/>
            <person name="Brettin T."/>
            <person name="Detter J.C."/>
            <person name="Han C."/>
            <person name="Larimer F."/>
            <person name="Land M."/>
            <person name="Hauser L."/>
            <person name="Kyrpides N."/>
            <person name="Ovchinnikova G."/>
            <person name="Lovley D."/>
        </authorList>
    </citation>
    <scope>NUCLEOTIDE SEQUENCE [LARGE SCALE GENOMIC DNA]</scope>
    <source>
        <strain>M21</strain>
    </source>
</reference>
<comment type="function">
    <text evidence="1">Displays ATPase and GTPase activities.</text>
</comment>
<comment type="similarity">
    <text evidence="1">Belongs to the RapZ-like family.</text>
</comment>
<sequence>MRIVIITGLSGSGKSTAVRALEDEGFFCLDNLPVSLVTTFIELVEHSREDIKDVALVMDIRSRDFIKGYDQVFQAMASAGHSVKIFYFDATDEVLIRRFSETRRRHPALEGASVPEGIRFERDQLAGLRRIATAIIDTSEMNVHRLKELVIGLVKGGEGVLEMQVNLQSFGFRYGLPLESDLVMDVRFLPNPYFVATLRPFSGLDQGVREYVMGHKETVVFLEHFRNMLELLLPSYRREGKSYLSVSIGCTGGRHRSVAIAEELYNYFRQRNVNIKITHRDIDKGLG</sequence>
<feature type="chain" id="PRO_1000212362" description="Nucleotide-binding protein GM21_3387">
    <location>
        <begin position="1"/>
        <end position="287"/>
    </location>
</feature>
<feature type="binding site" evidence="1">
    <location>
        <begin position="8"/>
        <end position="15"/>
    </location>
    <ligand>
        <name>ATP</name>
        <dbReference type="ChEBI" id="CHEBI:30616"/>
    </ligand>
</feature>
<feature type="binding site" evidence="1">
    <location>
        <begin position="59"/>
        <end position="62"/>
    </location>
    <ligand>
        <name>GTP</name>
        <dbReference type="ChEBI" id="CHEBI:37565"/>
    </ligand>
</feature>
<organism>
    <name type="scientific">Geobacter sp. (strain M21)</name>
    <dbReference type="NCBI Taxonomy" id="443144"/>
    <lineage>
        <taxon>Bacteria</taxon>
        <taxon>Pseudomonadati</taxon>
        <taxon>Thermodesulfobacteriota</taxon>
        <taxon>Desulfuromonadia</taxon>
        <taxon>Geobacterales</taxon>
        <taxon>Geobacteraceae</taxon>
        <taxon>Geobacter</taxon>
    </lineage>
</organism>
<keyword id="KW-0067">ATP-binding</keyword>
<keyword id="KW-0342">GTP-binding</keyword>
<keyword id="KW-0547">Nucleotide-binding</keyword>
<proteinExistence type="inferred from homology"/>
<gene>
    <name type="ordered locus">GM21_3387</name>
</gene>
<dbReference type="EMBL" id="CP001661">
    <property type="protein sequence ID" value="ACT19412.1"/>
    <property type="molecule type" value="Genomic_DNA"/>
</dbReference>
<dbReference type="SMR" id="C6E4W6"/>
<dbReference type="STRING" id="443144.GM21_3387"/>
<dbReference type="KEGG" id="gem:GM21_3387"/>
<dbReference type="eggNOG" id="COG1660">
    <property type="taxonomic scope" value="Bacteria"/>
</dbReference>
<dbReference type="HOGENOM" id="CLU_059558_0_0_7"/>
<dbReference type="OrthoDB" id="9784461at2"/>
<dbReference type="GO" id="GO:0005524">
    <property type="term" value="F:ATP binding"/>
    <property type="evidence" value="ECO:0007669"/>
    <property type="project" value="UniProtKB-UniRule"/>
</dbReference>
<dbReference type="GO" id="GO:0005525">
    <property type="term" value="F:GTP binding"/>
    <property type="evidence" value="ECO:0007669"/>
    <property type="project" value="UniProtKB-UniRule"/>
</dbReference>
<dbReference type="Gene3D" id="3.40.50.300">
    <property type="entry name" value="P-loop containing nucleotide triphosphate hydrolases"/>
    <property type="match status" value="1"/>
</dbReference>
<dbReference type="HAMAP" id="MF_00636">
    <property type="entry name" value="RapZ_like"/>
    <property type="match status" value="1"/>
</dbReference>
<dbReference type="InterPro" id="IPR027417">
    <property type="entry name" value="P-loop_NTPase"/>
</dbReference>
<dbReference type="InterPro" id="IPR005337">
    <property type="entry name" value="RapZ-like"/>
</dbReference>
<dbReference type="InterPro" id="IPR053930">
    <property type="entry name" value="RapZ-like_N"/>
</dbReference>
<dbReference type="InterPro" id="IPR053931">
    <property type="entry name" value="RapZ_C"/>
</dbReference>
<dbReference type="NCBIfam" id="NF003828">
    <property type="entry name" value="PRK05416.1"/>
    <property type="match status" value="1"/>
</dbReference>
<dbReference type="PANTHER" id="PTHR30448">
    <property type="entry name" value="RNASE ADAPTER PROTEIN RAPZ"/>
    <property type="match status" value="1"/>
</dbReference>
<dbReference type="PANTHER" id="PTHR30448:SF0">
    <property type="entry name" value="RNASE ADAPTER PROTEIN RAPZ"/>
    <property type="match status" value="1"/>
</dbReference>
<dbReference type="Pfam" id="PF22740">
    <property type="entry name" value="PapZ_C"/>
    <property type="match status" value="1"/>
</dbReference>
<dbReference type="Pfam" id="PF03668">
    <property type="entry name" value="RapZ-like_N"/>
    <property type="match status" value="1"/>
</dbReference>
<dbReference type="PIRSF" id="PIRSF005052">
    <property type="entry name" value="P-loopkin"/>
    <property type="match status" value="1"/>
</dbReference>
<dbReference type="SUPFAM" id="SSF52540">
    <property type="entry name" value="P-loop containing nucleoside triphosphate hydrolases"/>
    <property type="match status" value="1"/>
</dbReference>
<name>Y3387_GEOSM</name>
<evidence type="ECO:0000255" key="1">
    <source>
        <dbReference type="HAMAP-Rule" id="MF_00636"/>
    </source>
</evidence>